<keyword id="KW-0001">2Fe-2S</keyword>
<keyword id="KW-0004">4Fe-4S</keyword>
<keyword id="KW-0093">Biotin biosynthesis</keyword>
<keyword id="KW-0408">Iron</keyword>
<keyword id="KW-0411">Iron-sulfur</keyword>
<keyword id="KW-0479">Metal-binding</keyword>
<keyword id="KW-1185">Reference proteome</keyword>
<keyword id="KW-0949">S-adenosyl-L-methionine</keyword>
<keyword id="KW-0808">Transferase</keyword>
<accession>A5CWW0</accession>
<sequence>MTQQRHNWTLKEVEALFTLPFNDLLFQAHSIHRKNFDPNQVQISSLLNIKTGACPEDCLYCSQSSKYDTGLEREKLMEIDLVLKQAKQAQDNGATRFCMGAAWRNPTDKSINKVIPMIQGVKDMGMETCVTLGMLTQKQAFVLKEVGLDYYNHNIDTSKENYSNIVTTRNFQDRLNTLESVQNANIRVCSGGILGLGEDQTDRASMLRSLSNLAIHPDSVPLNLLVPIPGTPFENIEPPTESEFIRTIAVARIMMPKSVVRLSAGRTKMGDTMQALCFFAGANSIFYGEQLLTTDNPNTDSDQDLFVRLGINQKQANNLQSV</sequence>
<evidence type="ECO:0000255" key="1">
    <source>
        <dbReference type="HAMAP-Rule" id="MF_01694"/>
    </source>
</evidence>
<evidence type="ECO:0000255" key="2">
    <source>
        <dbReference type="PROSITE-ProRule" id="PRU01266"/>
    </source>
</evidence>
<comment type="function">
    <text evidence="1">Catalyzes the conversion of dethiobiotin (DTB) to biotin by the insertion of a sulfur atom into dethiobiotin via a radical-based mechanism.</text>
</comment>
<comment type="catalytic activity">
    <reaction evidence="1">
        <text>(4R,5S)-dethiobiotin + (sulfur carrier)-SH + 2 reduced [2Fe-2S]-[ferredoxin] + 2 S-adenosyl-L-methionine = (sulfur carrier)-H + biotin + 2 5'-deoxyadenosine + 2 L-methionine + 2 oxidized [2Fe-2S]-[ferredoxin]</text>
        <dbReference type="Rhea" id="RHEA:22060"/>
        <dbReference type="Rhea" id="RHEA-COMP:10000"/>
        <dbReference type="Rhea" id="RHEA-COMP:10001"/>
        <dbReference type="Rhea" id="RHEA-COMP:14737"/>
        <dbReference type="Rhea" id="RHEA-COMP:14739"/>
        <dbReference type="ChEBI" id="CHEBI:17319"/>
        <dbReference type="ChEBI" id="CHEBI:29917"/>
        <dbReference type="ChEBI" id="CHEBI:33737"/>
        <dbReference type="ChEBI" id="CHEBI:33738"/>
        <dbReference type="ChEBI" id="CHEBI:57586"/>
        <dbReference type="ChEBI" id="CHEBI:57844"/>
        <dbReference type="ChEBI" id="CHEBI:59789"/>
        <dbReference type="ChEBI" id="CHEBI:64428"/>
        <dbReference type="ChEBI" id="CHEBI:149473"/>
        <dbReference type="EC" id="2.8.1.6"/>
    </reaction>
</comment>
<comment type="cofactor">
    <cofactor evidence="1">
        <name>[4Fe-4S] cluster</name>
        <dbReference type="ChEBI" id="CHEBI:49883"/>
    </cofactor>
    <text evidence="1">Binds 1 [4Fe-4S] cluster. The cluster is coordinated with 3 cysteines and an exchangeable S-adenosyl-L-methionine.</text>
</comment>
<comment type="cofactor">
    <cofactor evidence="1">
        <name>[2Fe-2S] cluster</name>
        <dbReference type="ChEBI" id="CHEBI:190135"/>
    </cofactor>
    <text evidence="1">Binds 1 [2Fe-2S] cluster. The cluster is coordinated with 3 cysteines and 1 arginine.</text>
</comment>
<comment type="pathway">
    <text evidence="1">Cofactor biosynthesis; biotin biosynthesis; biotin from 7,8-diaminononanoate: step 2/2.</text>
</comment>
<comment type="subunit">
    <text evidence="1">Homodimer.</text>
</comment>
<comment type="similarity">
    <text evidence="1">Belongs to the radical SAM superfamily. Biotin synthase family.</text>
</comment>
<reference key="1">
    <citation type="journal article" date="2007" name="Curr. Biol.">
        <title>Reduced genome of the thioautotrophic intracellular symbiont in a deep-sea clam, Calyptogena okutanii.</title>
        <authorList>
            <person name="Kuwahara H."/>
            <person name="Yoshida T."/>
            <person name="Takaki Y."/>
            <person name="Shimamura S."/>
            <person name="Nishi S."/>
            <person name="Harada M."/>
            <person name="Matsuyama K."/>
            <person name="Takishita K."/>
            <person name="Kawato M."/>
            <person name="Uematsu K."/>
            <person name="Fujiwara Y."/>
            <person name="Sato T."/>
            <person name="Kato C."/>
            <person name="Kitagawa M."/>
            <person name="Kato I."/>
            <person name="Maruyama T."/>
        </authorList>
    </citation>
    <scope>NUCLEOTIDE SEQUENCE [LARGE SCALE GENOMIC DNA]</scope>
    <source>
        <strain>HA</strain>
    </source>
</reference>
<proteinExistence type="inferred from homology"/>
<organism>
    <name type="scientific">Vesicomyosocius okutanii subsp. Calyptogena okutanii (strain HA)</name>
    <dbReference type="NCBI Taxonomy" id="412965"/>
    <lineage>
        <taxon>Bacteria</taxon>
        <taxon>Pseudomonadati</taxon>
        <taxon>Pseudomonadota</taxon>
        <taxon>Gammaproteobacteria</taxon>
        <taxon>Candidatus Pseudothioglobaceae</taxon>
        <taxon>Candidatus Vesicomyosocius</taxon>
    </lineage>
</organism>
<protein>
    <recommendedName>
        <fullName evidence="1">Biotin synthase</fullName>
        <ecNumber evidence="1">2.8.1.6</ecNumber>
    </recommendedName>
</protein>
<feature type="chain" id="PRO_0000381694" description="Biotin synthase">
    <location>
        <begin position="1"/>
        <end position="322"/>
    </location>
</feature>
<feature type="domain" description="Radical SAM core" evidence="2">
    <location>
        <begin position="39"/>
        <end position="266"/>
    </location>
</feature>
<feature type="binding site" evidence="1">
    <location>
        <position position="54"/>
    </location>
    <ligand>
        <name>[4Fe-4S] cluster</name>
        <dbReference type="ChEBI" id="CHEBI:49883"/>
        <note>4Fe-4S-S-AdoMet</note>
    </ligand>
</feature>
<feature type="binding site" evidence="1">
    <location>
        <position position="58"/>
    </location>
    <ligand>
        <name>[4Fe-4S] cluster</name>
        <dbReference type="ChEBI" id="CHEBI:49883"/>
        <note>4Fe-4S-S-AdoMet</note>
    </ligand>
</feature>
<feature type="binding site" evidence="1">
    <location>
        <position position="61"/>
    </location>
    <ligand>
        <name>[4Fe-4S] cluster</name>
        <dbReference type="ChEBI" id="CHEBI:49883"/>
        <note>4Fe-4S-S-AdoMet</note>
    </ligand>
</feature>
<feature type="binding site" evidence="1">
    <location>
        <position position="98"/>
    </location>
    <ligand>
        <name>[2Fe-2S] cluster</name>
        <dbReference type="ChEBI" id="CHEBI:190135"/>
    </ligand>
</feature>
<feature type="binding site" evidence="1">
    <location>
        <position position="129"/>
    </location>
    <ligand>
        <name>[2Fe-2S] cluster</name>
        <dbReference type="ChEBI" id="CHEBI:190135"/>
    </ligand>
</feature>
<feature type="binding site" evidence="1">
    <location>
        <position position="189"/>
    </location>
    <ligand>
        <name>[2Fe-2S] cluster</name>
        <dbReference type="ChEBI" id="CHEBI:190135"/>
    </ligand>
</feature>
<feature type="binding site" evidence="1">
    <location>
        <position position="261"/>
    </location>
    <ligand>
        <name>[2Fe-2S] cluster</name>
        <dbReference type="ChEBI" id="CHEBI:190135"/>
    </ligand>
</feature>
<gene>
    <name evidence="1" type="primary">bioB</name>
    <name type="ordered locus">COSY_0459</name>
</gene>
<dbReference type="EC" id="2.8.1.6" evidence="1"/>
<dbReference type="EMBL" id="AP009247">
    <property type="protein sequence ID" value="BAF61578.1"/>
    <property type="molecule type" value="Genomic_DNA"/>
</dbReference>
<dbReference type="RefSeq" id="WP_011929848.1">
    <property type="nucleotide sequence ID" value="NC_009465.1"/>
</dbReference>
<dbReference type="SMR" id="A5CWW0"/>
<dbReference type="STRING" id="412965.COSY_0459"/>
<dbReference type="KEGG" id="vok:COSY_0459"/>
<dbReference type="eggNOG" id="COG0502">
    <property type="taxonomic scope" value="Bacteria"/>
</dbReference>
<dbReference type="HOGENOM" id="CLU_033172_1_2_6"/>
<dbReference type="OrthoDB" id="9786826at2"/>
<dbReference type="UniPathway" id="UPA00078">
    <property type="reaction ID" value="UER00162"/>
</dbReference>
<dbReference type="Proteomes" id="UP000000247">
    <property type="component" value="Chromosome"/>
</dbReference>
<dbReference type="GO" id="GO:0051537">
    <property type="term" value="F:2 iron, 2 sulfur cluster binding"/>
    <property type="evidence" value="ECO:0007669"/>
    <property type="project" value="UniProtKB-KW"/>
</dbReference>
<dbReference type="GO" id="GO:0051539">
    <property type="term" value="F:4 iron, 4 sulfur cluster binding"/>
    <property type="evidence" value="ECO:0007669"/>
    <property type="project" value="UniProtKB-KW"/>
</dbReference>
<dbReference type="GO" id="GO:0004076">
    <property type="term" value="F:biotin synthase activity"/>
    <property type="evidence" value="ECO:0007669"/>
    <property type="project" value="UniProtKB-UniRule"/>
</dbReference>
<dbReference type="GO" id="GO:0005506">
    <property type="term" value="F:iron ion binding"/>
    <property type="evidence" value="ECO:0007669"/>
    <property type="project" value="UniProtKB-UniRule"/>
</dbReference>
<dbReference type="GO" id="GO:0009102">
    <property type="term" value="P:biotin biosynthetic process"/>
    <property type="evidence" value="ECO:0007669"/>
    <property type="project" value="UniProtKB-UniRule"/>
</dbReference>
<dbReference type="CDD" id="cd01335">
    <property type="entry name" value="Radical_SAM"/>
    <property type="match status" value="1"/>
</dbReference>
<dbReference type="FunFam" id="3.20.20.70:FF:000011">
    <property type="entry name" value="Biotin synthase"/>
    <property type="match status" value="1"/>
</dbReference>
<dbReference type="Gene3D" id="3.20.20.70">
    <property type="entry name" value="Aldolase class I"/>
    <property type="match status" value="1"/>
</dbReference>
<dbReference type="HAMAP" id="MF_01694">
    <property type="entry name" value="BioB"/>
    <property type="match status" value="1"/>
</dbReference>
<dbReference type="InterPro" id="IPR013785">
    <property type="entry name" value="Aldolase_TIM"/>
</dbReference>
<dbReference type="InterPro" id="IPR010722">
    <property type="entry name" value="BATS_dom"/>
</dbReference>
<dbReference type="InterPro" id="IPR002684">
    <property type="entry name" value="Biotin_synth/BioAB"/>
</dbReference>
<dbReference type="InterPro" id="IPR024177">
    <property type="entry name" value="Biotin_synthase"/>
</dbReference>
<dbReference type="InterPro" id="IPR006638">
    <property type="entry name" value="Elp3/MiaA/NifB-like_rSAM"/>
</dbReference>
<dbReference type="InterPro" id="IPR007197">
    <property type="entry name" value="rSAM"/>
</dbReference>
<dbReference type="NCBIfam" id="TIGR00433">
    <property type="entry name" value="bioB"/>
    <property type="match status" value="1"/>
</dbReference>
<dbReference type="PANTHER" id="PTHR22976">
    <property type="entry name" value="BIOTIN SYNTHASE"/>
    <property type="match status" value="1"/>
</dbReference>
<dbReference type="PANTHER" id="PTHR22976:SF2">
    <property type="entry name" value="BIOTIN SYNTHASE, MITOCHONDRIAL"/>
    <property type="match status" value="1"/>
</dbReference>
<dbReference type="Pfam" id="PF06968">
    <property type="entry name" value="BATS"/>
    <property type="match status" value="1"/>
</dbReference>
<dbReference type="Pfam" id="PF04055">
    <property type="entry name" value="Radical_SAM"/>
    <property type="match status" value="1"/>
</dbReference>
<dbReference type="PIRSF" id="PIRSF001619">
    <property type="entry name" value="Biotin_synth"/>
    <property type="match status" value="1"/>
</dbReference>
<dbReference type="SFLD" id="SFLDF00272">
    <property type="entry name" value="biotin_synthase"/>
    <property type="match status" value="1"/>
</dbReference>
<dbReference type="SFLD" id="SFLDG01278">
    <property type="entry name" value="biotin_synthase_like"/>
    <property type="match status" value="1"/>
</dbReference>
<dbReference type="SMART" id="SM00876">
    <property type="entry name" value="BATS"/>
    <property type="match status" value="1"/>
</dbReference>
<dbReference type="SMART" id="SM00729">
    <property type="entry name" value="Elp3"/>
    <property type="match status" value="1"/>
</dbReference>
<dbReference type="SUPFAM" id="SSF102114">
    <property type="entry name" value="Radical SAM enzymes"/>
    <property type="match status" value="1"/>
</dbReference>
<dbReference type="PROSITE" id="PS51918">
    <property type="entry name" value="RADICAL_SAM"/>
    <property type="match status" value="1"/>
</dbReference>
<name>BIOB_VESOH</name>